<gene>
    <name type="primary">SNRNP40</name>
    <name type="synonym">WDR57</name>
</gene>
<accession>Q5RF51</accession>
<evidence type="ECO:0000250" key="1">
    <source>
        <dbReference type="UniProtKB" id="Q6PE01"/>
    </source>
</evidence>
<evidence type="ECO:0000250" key="2">
    <source>
        <dbReference type="UniProtKB" id="Q96DI7"/>
    </source>
</evidence>
<feature type="chain" id="PRO_0000051419" description="U5 small nuclear ribonucleoprotein 40 kDa protein">
    <location>
        <begin position="1"/>
        <end position="357"/>
    </location>
</feature>
<feature type="repeat" description="WD 1">
    <location>
        <begin position="64"/>
        <end position="103"/>
    </location>
</feature>
<feature type="repeat" description="WD 2">
    <location>
        <begin position="107"/>
        <end position="146"/>
    </location>
</feature>
<feature type="repeat" description="WD 3">
    <location>
        <begin position="149"/>
        <end position="189"/>
    </location>
</feature>
<feature type="repeat" description="WD 4">
    <location>
        <begin position="191"/>
        <end position="230"/>
    </location>
</feature>
<feature type="repeat" description="WD 5">
    <location>
        <begin position="233"/>
        <end position="272"/>
    </location>
</feature>
<feature type="repeat" description="WD 6">
    <location>
        <begin position="283"/>
        <end position="322"/>
    </location>
</feature>
<feature type="repeat" description="WD 7">
    <location>
        <begin position="325"/>
        <end position="357"/>
    </location>
</feature>
<feature type="modified residue" description="Asymmetric dimethylarginine" evidence="1">
    <location>
        <position position="21"/>
    </location>
</feature>
<feature type="cross-link" description="Glycyl lysine isopeptide (Lys-Gly) (interchain with G-Cter in SUMO2)" evidence="2">
    <location>
        <position position="18"/>
    </location>
</feature>
<feature type="cross-link" description="Glycyl lysine isopeptide (Lys-Gly) (interchain with G-Cter in SUMO2)" evidence="2">
    <location>
        <position position="270"/>
    </location>
</feature>
<name>SNR40_PONAB</name>
<sequence length="357" mass="39158">MIEQQKRKGPELPLVPVKRQRHELLLGAGSGPGAGQQQATPGALLQAGPPRCSSLQAPIMLLSGHEGEVYCCKFHPNGSTLASAGFDRLILLWNVYGDCGNYATLKGYSGAVMELHYNTDGSMLFSASTDKTVAVWDSETGERVKRLKGHTSFVNSCYPARRGPQLVCTGSDDGTVKLWDIRKKAAIQTFQNTYQVLAVTFNDTSDQIISGGIDNDIKVWDLRQNKLTYTMRGHADSVTGLSLSSEGSYLLSNAMDNTVRVWDVRPFAPKERCVKIFQGNVHNFEKNLLRCSWSPDGSKIAAGSADRSVCVWDTTSRRILYKLPGHAGSINEVAFHPDEPIIISASSDKRLYMGEIQ</sequence>
<proteinExistence type="evidence at transcript level"/>
<organism>
    <name type="scientific">Pongo abelii</name>
    <name type="common">Sumatran orangutan</name>
    <name type="synonym">Pongo pygmaeus abelii</name>
    <dbReference type="NCBI Taxonomy" id="9601"/>
    <lineage>
        <taxon>Eukaryota</taxon>
        <taxon>Metazoa</taxon>
        <taxon>Chordata</taxon>
        <taxon>Craniata</taxon>
        <taxon>Vertebrata</taxon>
        <taxon>Euteleostomi</taxon>
        <taxon>Mammalia</taxon>
        <taxon>Eutheria</taxon>
        <taxon>Euarchontoglires</taxon>
        <taxon>Primates</taxon>
        <taxon>Haplorrhini</taxon>
        <taxon>Catarrhini</taxon>
        <taxon>Hominidae</taxon>
        <taxon>Pongo</taxon>
    </lineage>
</organism>
<reference key="1">
    <citation type="submission" date="2004-11" db="EMBL/GenBank/DDBJ databases">
        <authorList>
            <consortium name="The German cDNA consortium"/>
        </authorList>
    </citation>
    <scope>NUCLEOTIDE SEQUENCE [LARGE SCALE MRNA]</scope>
    <source>
        <tissue>Kidney</tissue>
    </source>
</reference>
<keyword id="KW-1017">Isopeptide bond</keyword>
<keyword id="KW-0488">Methylation</keyword>
<keyword id="KW-0507">mRNA processing</keyword>
<keyword id="KW-0508">mRNA splicing</keyword>
<keyword id="KW-0539">Nucleus</keyword>
<keyword id="KW-1185">Reference proteome</keyword>
<keyword id="KW-0677">Repeat</keyword>
<keyword id="KW-0747">Spliceosome</keyword>
<keyword id="KW-0832">Ubl conjugation</keyword>
<keyword id="KW-0853">WD repeat</keyword>
<dbReference type="EMBL" id="CR857310">
    <property type="protein sequence ID" value="CAH89606.1"/>
    <property type="molecule type" value="mRNA"/>
</dbReference>
<dbReference type="RefSeq" id="NP_001124715.1">
    <property type="nucleotide sequence ID" value="NM_001131243.1"/>
</dbReference>
<dbReference type="SMR" id="Q5RF51"/>
<dbReference type="STRING" id="9601.ENSPPYP00000001868"/>
<dbReference type="GeneID" id="100171563"/>
<dbReference type="KEGG" id="pon:100171563"/>
<dbReference type="CTD" id="9410"/>
<dbReference type="eggNOG" id="KOG0265">
    <property type="taxonomic scope" value="Eukaryota"/>
</dbReference>
<dbReference type="InParanoid" id="Q5RF51"/>
<dbReference type="OrthoDB" id="1068471at2759"/>
<dbReference type="Proteomes" id="UP000001595">
    <property type="component" value="Unplaced"/>
</dbReference>
<dbReference type="GO" id="GO:0071013">
    <property type="term" value="C:catalytic step 2 spliceosome"/>
    <property type="evidence" value="ECO:0007669"/>
    <property type="project" value="TreeGrafter"/>
</dbReference>
<dbReference type="GO" id="GO:0003723">
    <property type="term" value="F:RNA binding"/>
    <property type="evidence" value="ECO:0007669"/>
    <property type="project" value="TreeGrafter"/>
</dbReference>
<dbReference type="GO" id="GO:0006397">
    <property type="term" value="P:mRNA processing"/>
    <property type="evidence" value="ECO:0007669"/>
    <property type="project" value="UniProtKB-KW"/>
</dbReference>
<dbReference type="GO" id="GO:0008380">
    <property type="term" value="P:RNA splicing"/>
    <property type="evidence" value="ECO:0007669"/>
    <property type="project" value="UniProtKB-KW"/>
</dbReference>
<dbReference type="CDD" id="cd00200">
    <property type="entry name" value="WD40"/>
    <property type="match status" value="1"/>
</dbReference>
<dbReference type="FunFam" id="2.130.10.10:FF:000229">
    <property type="entry name" value="Small nuclear ribonucleoprotein U5 subunit 40"/>
    <property type="match status" value="1"/>
</dbReference>
<dbReference type="Gene3D" id="2.130.10.10">
    <property type="entry name" value="YVTN repeat-like/Quinoprotein amine dehydrogenase"/>
    <property type="match status" value="1"/>
</dbReference>
<dbReference type="InterPro" id="IPR020472">
    <property type="entry name" value="G-protein_beta_WD-40_rep"/>
</dbReference>
<dbReference type="InterPro" id="IPR052234">
    <property type="entry name" value="U5_snRNP_Component"/>
</dbReference>
<dbReference type="InterPro" id="IPR015943">
    <property type="entry name" value="WD40/YVTN_repeat-like_dom_sf"/>
</dbReference>
<dbReference type="InterPro" id="IPR019775">
    <property type="entry name" value="WD40_repeat_CS"/>
</dbReference>
<dbReference type="InterPro" id="IPR036322">
    <property type="entry name" value="WD40_repeat_dom_sf"/>
</dbReference>
<dbReference type="InterPro" id="IPR001680">
    <property type="entry name" value="WD40_rpt"/>
</dbReference>
<dbReference type="PANTHER" id="PTHR44006">
    <property type="entry name" value="U5 SMALL NUCLEAR RIBONUCLEOPROTEIN 40 KDA PROTEIN"/>
    <property type="match status" value="1"/>
</dbReference>
<dbReference type="PANTHER" id="PTHR44006:SF1">
    <property type="entry name" value="U5 SMALL NUCLEAR RIBONUCLEOPROTEIN 40 KDA PROTEIN"/>
    <property type="match status" value="1"/>
</dbReference>
<dbReference type="Pfam" id="PF00400">
    <property type="entry name" value="WD40"/>
    <property type="match status" value="7"/>
</dbReference>
<dbReference type="PRINTS" id="PR00320">
    <property type="entry name" value="GPROTEINBRPT"/>
</dbReference>
<dbReference type="SMART" id="SM00320">
    <property type="entry name" value="WD40"/>
    <property type="match status" value="7"/>
</dbReference>
<dbReference type="SUPFAM" id="SSF50978">
    <property type="entry name" value="WD40 repeat-like"/>
    <property type="match status" value="1"/>
</dbReference>
<dbReference type="PROSITE" id="PS00678">
    <property type="entry name" value="WD_REPEATS_1"/>
    <property type="match status" value="5"/>
</dbReference>
<dbReference type="PROSITE" id="PS50082">
    <property type="entry name" value="WD_REPEATS_2"/>
    <property type="match status" value="7"/>
</dbReference>
<dbReference type="PROSITE" id="PS50294">
    <property type="entry name" value="WD_REPEATS_REGION"/>
    <property type="match status" value="1"/>
</dbReference>
<protein>
    <recommendedName>
        <fullName>U5 small nuclear ribonucleoprotein 40 kDa protein</fullName>
        <shortName>U5 snRNP 40 kDa protein</shortName>
    </recommendedName>
    <alternativeName>
        <fullName>WD repeat-containing protein 57</fullName>
    </alternativeName>
</protein>
<comment type="function">
    <text evidence="2">Required for pre-mRNA splicing as component of the activated spliceosome. Component of the U5 small nuclear ribonucleoprotein (snRNP) complex and the U4/U6-U5 tri-snRNP complex, building blocks of the spliceosome. As a component of the minor spliceosome, involved in the splicing of U12-type introns in pre-mRNAs (By similarity).</text>
</comment>
<comment type="subunit">
    <text evidence="2">Component of the pre-catalytic and catalytic spliceosome complexes. Component of the postcatalytic spliceosome P complex. Part of the U5 snRNP complex. Interacts with PRPF8. Component of the U4/U6-U5 tri-snRNP complex composed of the U4, U6 and U5 snRNAs and at least PRPF3, PRPF4, PRPF6, PRPF8, PRPF31, SNRNP200, TXNL4A, WDR57, SNRNP40, DDX23, CD2BP2, PPIH, SNU13, EFTUD2, SART1 and USP39. Component of the minor spliceosome, which splices U12-type introns (By similarity).</text>
</comment>
<comment type="subcellular location">
    <subcellularLocation>
        <location evidence="2">Nucleus</location>
    </subcellularLocation>
</comment>